<gene>
    <name type="primary">dbp4</name>
    <name type="ORF">NFIA_056790</name>
</gene>
<keyword id="KW-0067">ATP-binding</keyword>
<keyword id="KW-0347">Helicase</keyword>
<keyword id="KW-0378">Hydrolase</keyword>
<keyword id="KW-0547">Nucleotide-binding</keyword>
<keyword id="KW-0539">Nucleus</keyword>
<keyword id="KW-1185">Reference proteome</keyword>
<keyword id="KW-0690">Ribosome biogenesis</keyword>
<keyword id="KW-0694">RNA-binding</keyword>
<keyword id="KW-0698">rRNA processing</keyword>
<organism>
    <name type="scientific">Neosartorya fischeri (strain ATCC 1020 / DSM 3700 / CBS 544.65 / FGSC A1164 / JCM 1740 / NRRL 181 / WB 181)</name>
    <name type="common">Aspergillus fischerianus</name>
    <dbReference type="NCBI Taxonomy" id="331117"/>
    <lineage>
        <taxon>Eukaryota</taxon>
        <taxon>Fungi</taxon>
        <taxon>Dikarya</taxon>
        <taxon>Ascomycota</taxon>
        <taxon>Pezizomycotina</taxon>
        <taxon>Eurotiomycetes</taxon>
        <taxon>Eurotiomycetidae</taxon>
        <taxon>Eurotiales</taxon>
        <taxon>Aspergillaceae</taxon>
        <taxon>Aspergillus</taxon>
        <taxon>Aspergillus subgen. Fumigati</taxon>
    </lineage>
</organism>
<feature type="chain" id="PRO_0000281701" description="ATP-dependent RNA helicase dbp4">
    <location>
        <begin position="1"/>
        <end position="810"/>
    </location>
</feature>
<feature type="domain" description="Helicase ATP-binding" evidence="2">
    <location>
        <begin position="78"/>
        <end position="252"/>
    </location>
</feature>
<feature type="domain" description="Helicase C-terminal" evidence="3">
    <location>
        <begin position="278"/>
        <end position="437"/>
    </location>
</feature>
<feature type="region of interest" description="Disordered" evidence="4">
    <location>
        <begin position="1"/>
        <end position="28"/>
    </location>
</feature>
<feature type="region of interest" description="Disordered" evidence="4">
    <location>
        <begin position="494"/>
        <end position="542"/>
    </location>
</feature>
<feature type="region of interest" description="Disordered" evidence="4">
    <location>
        <begin position="590"/>
        <end position="615"/>
    </location>
</feature>
<feature type="region of interest" description="Disordered" evidence="4">
    <location>
        <begin position="690"/>
        <end position="810"/>
    </location>
</feature>
<feature type="short sequence motif" description="Q motif">
    <location>
        <begin position="47"/>
        <end position="75"/>
    </location>
</feature>
<feature type="short sequence motif" description="DEAD box">
    <location>
        <begin position="200"/>
        <end position="203"/>
    </location>
</feature>
<feature type="compositionally biased region" description="Basic residues" evidence="4">
    <location>
        <begin position="9"/>
        <end position="25"/>
    </location>
</feature>
<feature type="compositionally biased region" description="Basic and acidic residues" evidence="4">
    <location>
        <begin position="522"/>
        <end position="542"/>
    </location>
</feature>
<feature type="compositionally biased region" description="Basic and acidic residues" evidence="4">
    <location>
        <begin position="690"/>
        <end position="704"/>
    </location>
</feature>
<feature type="compositionally biased region" description="Basic residues" evidence="4">
    <location>
        <begin position="705"/>
        <end position="714"/>
    </location>
</feature>
<feature type="compositionally biased region" description="Basic and acidic residues" evidence="4">
    <location>
        <begin position="764"/>
        <end position="786"/>
    </location>
</feature>
<feature type="binding site" evidence="2">
    <location>
        <begin position="91"/>
        <end position="98"/>
    </location>
    <ligand>
        <name>ATP</name>
        <dbReference type="ChEBI" id="CHEBI:30616"/>
    </ligand>
</feature>
<reference key="1">
    <citation type="journal article" date="2008" name="PLoS Genet.">
        <title>Genomic islands in the pathogenic filamentous fungus Aspergillus fumigatus.</title>
        <authorList>
            <person name="Fedorova N.D."/>
            <person name="Khaldi N."/>
            <person name="Joardar V.S."/>
            <person name="Maiti R."/>
            <person name="Amedeo P."/>
            <person name="Anderson M.J."/>
            <person name="Crabtree J."/>
            <person name="Silva J.C."/>
            <person name="Badger J.H."/>
            <person name="Albarraq A."/>
            <person name="Angiuoli S."/>
            <person name="Bussey H."/>
            <person name="Bowyer P."/>
            <person name="Cotty P.J."/>
            <person name="Dyer P.S."/>
            <person name="Egan A."/>
            <person name="Galens K."/>
            <person name="Fraser-Liggett C.M."/>
            <person name="Haas B.J."/>
            <person name="Inman J.M."/>
            <person name="Kent R."/>
            <person name="Lemieux S."/>
            <person name="Malavazi I."/>
            <person name="Orvis J."/>
            <person name="Roemer T."/>
            <person name="Ronning C.M."/>
            <person name="Sundaram J.P."/>
            <person name="Sutton G."/>
            <person name="Turner G."/>
            <person name="Venter J.C."/>
            <person name="White O.R."/>
            <person name="Whitty B.R."/>
            <person name="Youngman P."/>
            <person name="Wolfe K.H."/>
            <person name="Goldman G.H."/>
            <person name="Wortman J.R."/>
            <person name="Jiang B."/>
            <person name="Denning D.W."/>
            <person name="Nierman W.C."/>
        </authorList>
    </citation>
    <scope>NUCLEOTIDE SEQUENCE [LARGE SCALE GENOMIC DNA]</scope>
    <source>
        <strain>ATCC 1020 / DSM 3700 / CBS 544.65 / FGSC A1164 / JCM 1740 / NRRL 181 / WB 181</strain>
    </source>
</reference>
<name>DBP4_NEOFI</name>
<dbReference type="EC" id="3.6.4.13"/>
<dbReference type="EMBL" id="DS027698">
    <property type="protein sequence ID" value="EAW16330.1"/>
    <property type="molecule type" value="Genomic_DNA"/>
</dbReference>
<dbReference type="RefSeq" id="XP_001258227.1">
    <property type="nucleotide sequence ID" value="XM_001258226.1"/>
</dbReference>
<dbReference type="SMR" id="A1DNF9"/>
<dbReference type="STRING" id="331117.A1DNF9"/>
<dbReference type="EnsemblFungi" id="EAW16330">
    <property type="protein sequence ID" value="EAW16330"/>
    <property type="gene ID" value="NFIA_056790"/>
</dbReference>
<dbReference type="GeneID" id="4584742"/>
<dbReference type="KEGG" id="nfi:NFIA_056790"/>
<dbReference type="VEuPathDB" id="FungiDB:NFIA_056790"/>
<dbReference type="eggNOG" id="KOG0343">
    <property type="taxonomic scope" value="Eukaryota"/>
</dbReference>
<dbReference type="HOGENOM" id="CLU_003041_26_1_1"/>
<dbReference type="OMA" id="YDKMFER"/>
<dbReference type="OrthoDB" id="10259640at2759"/>
<dbReference type="Proteomes" id="UP000006702">
    <property type="component" value="Unassembled WGS sequence"/>
</dbReference>
<dbReference type="GO" id="GO:0005730">
    <property type="term" value="C:nucleolus"/>
    <property type="evidence" value="ECO:0007669"/>
    <property type="project" value="UniProtKB-SubCell"/>
</dbReference>
<dbReference type="GO" id="GO:0032040">
    <property type="term" value="C:small-subunit processome"/>
    <property type="evidence" value="ECO:0007669"/>
    <property type="project" value="EnsemblFungi"/>
</dbReference>
<dbReference type="GO" id="GO:0005524">
    <property type="term" value="F:ATP binding"/>
    <property type="evidence" value="ECO:0007669"/>
    <property type="project" value="UniProtKB-KW"/>
</dbReference>
<dbReference type="GO" id="GO:0016887">
    <property type="term" value="F:ATP hydrolysis activity"/>
    <property type="evidence" value="ECO:0007669"/>
    <property type="project" value="RHEA"/>
</dbReference>
<dbReference type="GO" id="GO:0042802">
    <property type="term" value="F:identical protein binding"/>
    <property type="evidence" value="ECO:0007669"/>
    <property type="project" value="EnsemblFungi"/>
</dbReference>
<dbReference type="GO" id="GO:0003723">
    <property type="term" value="F:RNA binding"/>
    <property type="evidence" value="ECO:0007669"/>
    <property type="project" value="UniProtKB-KW"/>
</dbReference>
<dbReference type="GO" id="GO:0003724">
    <property type="term" value="F:RNA helicase activity"/>
    <property type="evidence" value="ECO:0007669"/>
    <property type="project" value="UniProtKB-EC"/>
</dbReference>
<dbReference type="GO" id="GO:0006364">
    <property type="term" value="P:rRNA processing"/>
    <property type="evidence" value="ECO:0007669"/>
    <property type="project" value="UniProtKB-KW"/>
</dbReference>
<dbReference type="CDD" id="cd17941">
    <property type="entry name" value="DEADc_DDX10"/>
    <property type="match status" value="1"/>
</dbReference>
<dbReference type="CDD" id="cd18787">
    <property type="entry name" value="SF2_C_DEAD"/>
    <property type="match status" value="1"/>
</dbReference>
<dbReference type="Gene3D" id="3.40.50.300">
    <property type="entry name" value="P-loop containing nucleotide triphosphate hydrolases"/>
    <property type="match status" value="2"/>
</dbReference>
<dbReference type="InterPro" id="IPR011545">
    <property type="entry name" value="DEAD/DEAH_box_helicase_dom"/>
</dbReference>
<dbReference type="InterPro" id="IPR014001">
    <property type="entry name" value="Helicase_ATP-bd"/>
</dbReference>
<dbReference type="InterPro" id="IPR001650">
    <property type="entry name" value="Helicase_C-like"/>
</dbReference>
<dbReference type="InterPro" id="IPR027417">
    <property type="entry name" value="P-loop_NTPase"/>
</dbReference>
<dbReference type="InterPro" id="IPR000629">
    <property type="entry name" value="RNA-helicase_DEAD-box_CS"/>
</dbReference>
<dbReference type="InterPro" id="IPR014014">
    <property type="entry name" value="RNA_helicase_DEAD_Q_motif"/>
</dbReference>
<dbReference type="InterPro" id="IPR025313">
    <property type="entry name" value="SPB4-like_CTE"/>
</dbReference>
<dbReference type="PANTHER" id="PTHR24031">
    <property type="entry name" value="RNA HELICASE"/>
    <property type="match status" value="1"/>
</dbReference>
<dbReference type="Pfam" id="PF13959">
    <property type="entry name" value="CTE_SPB4"/>
    <property type="match status" value="1"/>
</dbReference>
<dbReference type="Pfam" id="PF00270">
    <property type="entry name" value="DEAD"/>
    <property type="match status" value="1"/>
</dbReference>
<dbReference type="Pfam" id="PF00271">
    <property type="entry name" value="Helicase_C"/>
    <property type="match status" value="1"/>
</dbReference>
<dbReference type="SMART" id="SM00487">
    <property type="entry name" value="DEXDc"/>
    <property type="match status" value="1"/>
</dbReference>
<dbReference type="SMART" id="SM01178">
    <property type="entry name" value="DUF4217"/>
    <property type="match status" value="1"/>
</dbReference>
<dbReference type="SMART" id="SM00490">
    <property type="entry name" value="HELICc"/>
    <property type="match status" value="1"/>
</dbReference>
<dbReference type="SUPFAM" id="SSF52540">
    <property type="entry name" value="P-loop containing nucleoside triphosphate hydrolases"/>
    <property type="match status" value="1"/>
</dbReference>
<dbReference type="PROSITE" id="PS00039">
    <property type="entry name" value="DEAD_ATP_HELICASE"/>
    <property type="match status" value="1"/>
</dbReference>
<dbReference type="PROSITE" id="PS51192">
    <property type="entry name" value="HELICASE_ATP_BIND_1"/>
    <property type="match status" value="1"/>
</dbReference>
<dbReference type="PROSITE" id="PS51194">
    <property type="entry name" value="HELICASE_CTER"/>
    <property type="match status" value="1"/>
</dbReference>
<dbReference type="PROSITE" id="PS51195">
    <property type="entry name" value="Q_MOTIF"/>
    <property type="match status" value="1"/>
</dbReference>
<comment type="function">
    <text evidence="1">ATP-dependent RNA helicase required for ribosome biogenesis. Involved in the release of U14 snoRNA in pre-ribosomal complexes. Required for pre-rRNA cleavage at site A2 (By similarity).</text>
</comment>
<comment type="catalytic activity">
    <reaction>
        <text>ATP + H2O = ADP + phosphate + H(+)</text>
        <dbReference type="Rhea" id="RHEA:13065"/>
        <dbReference type="ChEBI" id="CHEBI:15377"/>
        <dbReference type="ChEBI" id="CHEBI:15378"/>
        <dbReference type="ChEBI" id="CHEBI:30616"/>
        <dbReference type="ChEBI" id="CHEBI:43474"/>
        <dbReference type="ChEBI" id="CHEBI:456216"/>
        <dbReference type="EC" id="3.6.4.13"/>
    </reaction>
</comment>
<comment type="subunit">
    <text evidence="1">Interacts with the U3 and U14 snoRNAs. Associates with pre-ribosomal complexes (By similarity).</text>
</comment>
<comment type="subcellular location">
    <subcellularLocation>
        <location evidence="1">Nucleus</location>
        <location evidence="1">Nucleolus</location>
    </subcellularLocation>
</comment>
<comment type="domain">
    <text>The Q motif is unique to and characteristic of the DEAD box family of RNA helicases and controls ATP binding and hydrolysis.</text>
</comment>
<comment type="similarity">
    <text evidence="5">Belongs to the DEAD box helicase family. DDX10/DBP4 subfamily.</text>
</comment>
<proteinExistence type="inferred from homology"/>
<accession>A1DNF9</accession>
<protein>
    <recommendedName>
        <fullName>ATP-dependent RNA helicase dbp4</fullName>
        <ecNumber>3.6.4.13</ecNumber>
    </recommendedName>
</protein>
<evidence type="ECO:0000250" key="1"/>
<evidence type="ECO:0000255" key="2">
    <source>
        <dbReference type="PROSITE-ProRule" id="PRU00541"/>
    </source>
</evidence>
<evidence type="ECO:0000255" key="3">
    <source>
        <dbReference type="PROSITE-ProRule" id="PRU00542"/>
    </source>
</evidence>
<evidence type="ECO:0000256" key="4">
    <source>
        <dbReference type="SAM" id="MobiDB-lite"/>
    </source>
</evidence>
<evidence type="ECO:0000305" key="5"/>
<sequence>MAPAAGPRTGKHAKPPRSKTLKRKRGQDELSSLIQRVEDLDLKETFKSFSDLPLSEPTASGLASSHYKTLTDIQSRAISHALKGRDVLGAAKTGSGKTLAFLVPVLENLYRKQWAEHDGLGALILSPTRELAIQIFEVLRKIGRYHTFSAGLVIGGKSLKEEQERLGRMNILVCTPGRMLQHLDQTALFDTYNLQMLVLDEADRILDLGFQQTVDAIIGHLPKERQTLLFSATQTKKVSDLARLSLQDPEYVAVHETASSATPSKLQQHYVITPLPQKLDILWSFIRSNLKSKTMVFLSSGKQVRFVYESFRHLQPGIPLMHLHGRQKQGGRLDIVTRFSQSKHCVLFSTDVAARGLDFPAVDWVIQLDCPEDADTYIHRVGRTARYEREGRAVLFLDPSEEEGMLKRLEQKKVPIEKINIKANKQQSIKDQLQNMCFKDPELKYLGQKAFISYVKSVYIQKDKEIFKLKELKLDEFAASLGLPGAPRIKFIKGDDTKQRKNAPRAAAHLLSDDDDSDEEDGEKKSKKKEEPQVRTKYDRMFERRNQDVLAEHYSKLINDDGTMVAPNAGAGADADEDDDFLSVKRRFDAGDKDLGSSSDEDDESEKGDKKDVKVVHIDGSTPLVIDSKRREKLLKSKKKLLKFKGKGTKLVYDDEGNPHELYELEDEEQFKARGDAKDQQAKFLAEEVERTRMADMEDKEIAKQKRREKKEKRKARERELLAEAEEEETLVQLPPYEGDQDVDGGFSASEDEAPRPSKKPKVKFTEANDREEAEPWYKKSKKPSDKAANAPPQVQTLEDLESLATGLLG</sequence>